<name>DALD3_RAT</name>
<proteinExistence type="evidence at transcript level"/>
<organism>
    <name type="scientific">Rattus norvegicus</name>
    <name type="common">Rat</name>
    <dbReference type="NCBI Taxonomy" id="10116"/>
    <lineage>
        <taxon>Eukaryota</taxon>
        <taxon>Metazoa</taxon>
        <taxon>Chordata</taxon>
        <taxon>Craniata</taxon>
        <taxon>Vertebrata</taxon>
        <taxon>Euteleostomi</taxon>
        <taxon>Mammalia</taxon>
        <taxon>Eutheria</taxon>
        <taxon>Euarchontoglires</taxon>
        <taxon>Glires</taxon>
        <taxon>Rodentia</taxon>
        <taxon>Myomorpha</taxon>
        <taxon>Muroidea</taxon>
        <taxon>Muridae</taxon>
        <taxon>Murinae</taxon>
        <taxon>Rattus</taxon>
    </lineage>
</organism>
<sequence length="538" mass="59045">MATGRLGVGETLQALNAAVGPGSPVWFKETHARHLRVRDFLAPRSALQARFRDGQVPECVFRAVSCLQGPGVAPVLRCAPTPAGLSLQLQRPAVFEHVLGALASYATPAKPASPGPRVILHCPALRCNPDTLRLSQLRAVLVADHLVRVLRAHGVRVCTVPPVRDPHMSTFLQKLRVEWPSASKNTSTETLRTCVLAKFNVSKEETLPPGVLGRLCLKELVEQRHAAGYDPSIDHCLVTEDLLSVLSELQEAARHWPEDGHPAPVGGPDAGVDDCVVIHVVSCEEAFQQQKLDLLWQKVDDQVPHRQKHLVCGPVKVAGVPGTQMTAPEYHRLRHAQVCKASAQKHGGDLAQDPAWTETFDILSVATIKFEMLSTAPQGQLLLAHSTISTKGTKSGTFVMYNCARLATLFEGYKHGMEQGLYPTFPLVSSLDFSLLHDEGEWLLLFNSVLPFLDLLSQTVSLASTPGLHIPVRTEMVCKFLVQLSMDFSSYYNRVHILGEPRPHLFGQMFARLQLLRAVREVFHTGLAMLGLPPLSHI</sequence>
<accession>Q641Y9</accession>
<keyword id="KW-1185">Reference proteome</keyword>
<protein>
    <recommendedName>
        <fullName>DALR anticodon-binding domain-containing protein 3</fullName>
    </recommendedName>
</protein>
<gene>
    <name type="primary">Dalrd3</name>
</gene>
<comment type="function">
    <text evidence="1">Involved in tRNA methylation. Facilitates the recognition and targeting of tRNA(Arg)(CCU) and tRNA(Arg)(UCU) substrates for N(3)-methylcytidine modification by METTL2.</text>
</comment>
<comment type="subunit">
    <text evidence="1">Part of a complex containing tRNA(Arg) and METTL2. Interacts with tRNA(Arg)(CCU) and tRNA(Arg)(UCU). Interacts with METTL2.</text>
</comment>
<reference key="1">
    <citation type="journal article" date="2004" name="Genome Res.">
        <title>The status, quality, and expansion of the NIH full-length cDNA project: the Mammalian Gene Collection (MGC).</title>
        <authorList>
            <consortium name="The MGC Project Team"/>
        </authorList>
    </citation>
    <scope>NUCLEOTIDE SEQUENCE [LARGE SCALE MRNA]</scope>
    <source>
        <tissue>Testis</tissue>
    </source>
</reference>
<evidence type="ECO:0000250" key="1">
    <source>
        <dbReference type="UniProtKB" id="Q5D0E6"/>
    </source>
</evidence>
<dbReference type="EMBL" id="BC082046">
    <property type="protein sequence ID" value="AAH82046.1"/>
    <property type="molecule type" value="mRNA"/>
</dbReference>
<dbReference type="RefSeq" id="NP_001014236.1">
    <property type="nucleotide sequence ID" value="NM_001014214.1"/>
</dbReference>
<dbReference type="SMR" id="Q641Y9"/>
<dbReference type="FunCoup" id="Q641Y9">
    <property type="interactions" value="1516"/>
</dbReference>
<dbReference type="STRING" id="10116.ENSRNOP00000027318"/>
<dbReference type="GlyGen" id="Q641Y9">
    <property type="glycosylation" value="3 sites"/>
</dbReference>
<dbReference type="PhosphoSitePlus" id="Q641Y9"/>
<dbReference type="jPOST" id="Q641Y9"/>
<dbReference type="PaxDb" id="10116-ENSRNOP00000027318"/>
<dbReference type="Ensembl" id="ENSRNOT00000027318.6">
    <property type="protein sequence ID" value="ENSRNOP00000027318.4"/>
    <property type="gene ID" value="ENSRNOG00000020159.6"/>
</dbReference>
<dbReference type="GeneID" id="363146"/>
<dbReference type="KEGG" id="rno:363146"/>
<dbReference type="UCSC" id="RGD:1359206">
    <property type="organism name" value="rat"/>
</dbReference>
<dbReference type="AGR" id="RGD:1359206"/>
<dbReference type="CTD" id="55152"/>
<dbReference type="RGD" id="1359206">
    <property type="gene designation" value="Dalrd3"/>
</dbReference>
<dbReference type="eggNOG" id="KOG1195">
    <property type="taxonomic scope" value="Eukaryota"/>
</dbReference>
<dbReference type="GeneTree" id="ENSGT00390000014621"/>
<dbReference type="HOGENOM" id="CLU_041286_1_1_1"/>
<dbReference type="InParanoid" id="Q641Y9"/>
<dbReference type="OMA" id="REDQEWG"/>
<dbReference type="OrthoDB" id="9990834at2759"/>
<dbReference type="PhylomeDB" id="Q641Y9"/>
<dbReference type="TreeFam" id="TF325601"/>
<dbReference type="PRO" id="PR:Q641Y9"/>
<dbReference type="Proteomes" id="UP000002494">
    <property type="component" value="Chromosome 8"/>
</dbReference>
<dbReference type="Bgee" id="ENSRNOG00000020159">
    <property type="expression patterns" value="Expressed in ovary and 19 other cell types or tissues"/>
</dbReference>
<dbReference type="GO" id="GO:0004814">
    <property type="term" value="F:arginine-tRNA ligase activity"/>
    <property type="evidence" value="ECO:0007669"/>
    <property type="project" value="InterPro"/>
</dbReference>
<dbReference type="GO" id="GO:0005524">
    <property type="term" value="F:ATP binding"/>
    <property type="evidence" value="ECO:0007669"/>
    <property type="project" value="InterPro"/>
</dbReference>
<dbReference type="GO" id="GO:0000049">
    <property type="term" value="F:tRNA binding"/>
    <property type="evidence" value="ECO:0000250"/>
    <property type="project" value="UniProtKB"/>
</dbReference>
<dbReference type="GO" id="GO:0006420">
    <property type="term" value="P:arginyl-tRNA aminoacylation"/>
    <property type="evidence" value="ECO:0007669"/>
    <property type="project" value="InterPro"/>
</dbReference>
<dbReference type="GO" id="GO:0106217">
    <property type="term" value="P:tRNA C3-cytosine methylation"/>
    <property type="evidence" value="ECO:0000266"/>
    <property type="project" value="RGD"/>
</dbReference>
<dbReference type="Gene3D" id="1.10.730.10">
    <property type="entry name" value="Isoleucyl-tRNA Synthetase, Domain 1"/>
    <property type="match status" value="1"/>
</dbReference>
<dbReference type="InterPro" id="IPR008909">
    <property type="entry name" value="DALR_anticod-bd"/>
</dbReference>
<dbReference type="InterPro" id="IPR037380">
    <property type="entry name" value="DALRD3"/>
</dbReference>
<dbReference type="InterPro" id="IPR009080">
    <property type="entry name" value="tRNAsynth_Ia_anticodon-bd"/>
</dbReference>
<dbReference type="PANTHER" id="PTHR16043:SF1">
    <property type="entry name" value="DALR ANTICODON-BINDING DOMAIN-CONTAINING PROTEIN 3"/>
    <property type="match status" value="1"/>
</dbReference>
<dbReference type="PANTHER" id="PTHR16043">
    <property type="entry name" value="DALRD3 PROTEIN"/>
    <property type="match status" value="1"/>
</dbReference>
<dbReference type="Pfam" id="PF05746">
    <property type="entry name" value="DALR_1"/>
    <property type="match status" value="1"/>
</dbReference>
<dbReference type="SMART" id="SM00836">
    <property type="entry name" value="DALR_1"/>
    <property type="match status" value="1"/>
</dbReference>
<dbReference type="SUPFAM" id="SSF47323">
    <property type="entry name" value="Anticodon-binding domain of a subclass of class I aminoacyl-tRNA synthetases"/>
    <property type="match status" value="1"/>
</dbReference>
<feature type="chain" id="PRO_0000315850" description="DALR anticodon-binding domain-containing protein 3">
    <location>
        <begin position="1"/>
        <end position="538"/>
    </location>
</feature>